<protein>
    <recommendedName>
        <fullName evidence="1">Sugar fermentation stimulation protein homolog</fullName>
    </recommendedName>
</protein>
<name>SFSA_PELPD</name>
<reference key="1">
    <citation type="submission" date="2006-10" db="EMBL/GenBank/DDBJ databases">
        <title>Complete sequence of chromosome of Pelobacter propionicus DSM 2379.</title>
        <authorList>
            <consortium name="US DOE Joint Genome Institute"/>
            <person name="Copeland A."/>
            <person name="Lucas S."/>
            <person name="Lapidus A."/>
            <person name="Barry K."/>
            <person name="Detter J.C."/>
            <person name="Glavina del Rio T."/>
            <person name="Hammon N."/>
            <person name="Israni S."/>
            <person name="Dalin E."/>
            <person name="Tice H."/>
            <person name="Pitluck S."/>
            <person name="Saunders E."/>
            <person name="Brettin T."/>
            <person name="Bruce D."/>
            <person name="Han C."/>
            <person name="Tapia R."/>
            <person name="Schmutz J."/>
            <person name="Larimer F."/>
            <person name="Land M."/>
            <person name="Hauser L."/>
            <person name="Kyrpides N."/>
            <person name="Kim E."/>
            <person name="Lovley D."/>
            <person name="Richardson P."/>
        </authorList>
    </citation>
    <scope>NUCLEOTIDE SEQUENCE [LARGE SCALE GENOMIC DNA]</scope>
    <source>
        <strain>DSM 2379 / NBRC 103807 / OttBd1</strain>
    </source>
</reference>
<organism>
    <name type="scientific">Pelobacter propionicus (strain DSM 2379 / NBRC 103807 / OttBd1)</name>
    <dbReference type="NCBI Taxonomy" id="338966"/>
    <lineage>
        <taxon>Bacteria</taxon>
        <taxon>Pseudomonadati</taxon>
        <taxon>Thermodesulfobacteriota</taxon>
        <taxon>Desulfuromonadia</taxon>
        <taxon>Desulfuromonadales</taxon>
        <taxon>Desulfuromonadaceae</taxon>
        <taxon>Pelobacter</taxon>
    </lineage>
</organism>
<proteinExistence type="inferred from homology"/>
<keyword id="KW-1185">Reference proteome</keyword>
<comment type="similarity">
    <text evidence="1">Belongs to the SfsA family.</text>
</comment>
<gene>
    <name evidence="1" type="primary">sfsA</name>
    <name type="ordered locus">Ppro_3376</name>
</gene>
<accession>A1AUE8</accession>
<dbReference type="EMBL" id="CP000482">
    <property type="protein sequence ID" value="ABL00969.1"/>
    <property type="molecule type" value="Genomic_DNA"/>
</dbReference>
<dbReference type="RefSeq" id="WP_011737185.1">
    <property type="nucleotide sequence ID" value="NC_008609.1"/>
</dbReference>
<dbReference type="SMR" id="A1AUE8"/>
<dbReference type="STRING" id="338966.Ppro_3376"/>
<dbReference type="KEGG" id="ppd:Ppro_3376"/>
<dbReference type="eggNOG" id="COG1489">
    <property type="taxonomic scope" value="Bacteria"/>
</dbReference>
<dbReference type="HOGENOM" id="CLU_052299_2_0_7"/>
<dbReference type="OrthoDB" id="9802365at2"/>
<dbReference type="Proteomes" id="UP000006732">
    <property type="component" value="Chromosome"/>
</dbReference>
<dbReference type="GO" id="GO:0003677">
    <property type="term" value="F:DNA binding"/>
    <property type="evidence" value="ECO:0007669"/>
    <property type="project" value="InterPro"/>
</dbReference>
<dbReference type="CDD" id="cd22359">
    <property type="entry name" value="SfsA-like_bacterial"/>
    <property type="match status" value="1"/>
</dbReference>
<dbReference type="FunFam" id="3.40.1350.60:FF:000001">
    <property type="entry name" value="Sugar fermentation stimulation protein A"/>
    <property type="match status" value="1"/>
</dbReference>
<dbReference type="Gene3D" id="2.40.50.580">
    <property type="match status" value="1"/>
</dbReference>
<dbReference type="Gene3D" id="3.40.1350.60">
    <property type="match status" value="1"/>
</dbReference>
<dbReference type="HAMAP" id="MF_00095">
    <property type="entry name" value="SfsA"/>
    <property type="match status" value="1"/>
</dbReference>
<dbReference type="InterPro" id="IPR005224">
    <property type="entry name" value="SfsA"/>
</dbReference>
<dbReference type="InterPro" id="IPR040452">
    <property type="entry name" value="SfsA_C"/>
</dbReference>
<dbReference type="InterPro" id="IPR041465">
    <property type="entry name" value="SfsA_N"/>
</dbReference>
<dbReference type="NCBIfam" id="TIGR00230">
    <property type="entry name" value="sfsA"/>
    <property type="match status" value="1"/>
</dbReference>
<dbReference type="PANTHER" id="PTHR30545">
    <property type="entry name" value="SUGAR FERMENTATION STIMULATION PROTEIN A"/>
    <property type="match status" value="1"/>
</dbReference>
<dbReference type="PANTHER" id="PTHR30545:SF2">
    <property type="entry name" value="SUGAR FERMENTATION STIMULATION PROTEIN A"/>
    <property type="match status" value="1"/>
</dbReference>
<dbReference type="Pfam" id="PF03749">
    <property type="entry name" value="SfsA"/>
    <property type="match status" value="1"/>
</dbReference>
<dbReference type="Pfam" id="PF17746">
    <property type="entry name" value="SfsA_N"/>
    <property type="match status" value="1"/>
</dbReference>
<evidence type="ECO:0000255" key="1">
    <source>
        <dbReference type="HAMAP-Rule" id="MF_00095"/>
    </source>
</evidence>
<sequence length="230" mass="25307">MRLPPLIAGTLVRRYKRFLADVILEDGSPVTVHCPNSGSMKGCASPGSRVLLSRSANPGRAYPLTWELVESDGCWAGINTSLPNRLVREAIENGTVVELRGYDSIRPEVAYGQRSRIDLLLEGPAGRCYVEVKNVTLVEGERALFPDAVTVRGQKHLNELMRVVREGDRGVIFFTVQRGDAESVSPADAIDPEYGRLLRLALDSGVEALAYRAVVSPEEIRLKERLPVIL</sequence>
<feature type="chain" id="PRO_0000340147" description="Sugar fermentation stimulation protein homolog">
    <location>
        <begin position="1"/>
        <end position="230"/>
    </location>
</feature>